<keyword id="KW-1185">Reference proteome</keyword>
<proteinExistence type="predicted"/>
<evidence type="ECO:0000305" key="1"/>
<gene>
    <name type="ordered locus">HI_1499</name>
</gene>
<feature type="chain" id="PRO_0000077821" description="Mu-like prophage FluMu protein gp27">
    <location>
        <begin position="1"/>
        <end position="189"/>
    </location>
</feature>
<comment type="similarity">
    <text evidence="1">To phage Mu protein gp27.</text>
</comment>
<name>VG27_HAEIN</name>
<reference key="1">
    <citation type="journal article" date="1995" name="Science">
        <title>Whole-genome random sequencing and assembly of Haemophilus influenzae Rd.</title>
        <authorList>
            <person name="Fleischmann R.D."/>
            <person name="Adams M.D."/>
            <person name="White O."/>
            <person name="Clayton R.A."/>
            <person name="Kirkness E.F."/>
            <person name="Kerlavage A.R."/>
            <person name="Bult C.J."/>
            <person name="Tomb J.-F."/>
            <person name="Dougherty B.A."/>
            <person name="Merrick J.M."/>
            <person name="McKenney K."/>
            <person name="Sutton G.G."/>
            <person name="FitzHugh W."/>
            <person name="Fields C.A."/>
            <person name="Gocayne J.D."/>
            <person name="Scott J.D."/>
            <person name="Shirley R."/>
            <person name="Liu L.-I."/>
            <person name="Glodek A."/>
            <person name="Kelley J.M."/>
            <person name="Weidman J.F."/>
            <person name="Phillips C.A."/>
            <person name="Spriggs T."/>
            <person name="Hedblom E."/>
            <person name="Cotton M.D."/>
            <person name="Utterback T.R."/>
            <person name="Hanna M.C."/>
            <person name="Nguyen D.T."/>
            <person name="Saudek D.M."/>
            <person name="Brandon R.C."/>
            <person name="Fine L.D."/>
            <person name="Fritchman J.L."/>
            <person name="Fuhrmann J.L."/>
            <person name="Geoghagen N.S.M."/>
            <person name="Gnehm C.L."/>
            <person name="McDonald L.A."/>
            <person name="Small K.V."/>
            <person name="Fraser C.M."/>
            <person name="Smith H.O."/>
            <person name="Venter J.C."/>
        </authorList>
    </citation>
    <scope>NUCLEOTIDE SEQUENCE [LARGE SCALE GENOMIC DNA]</scope>
    <source>
        <strain>ATCC 51907 / DSM 11121 / KW20 / Rd</strain>
    </source>
</reference>
<organism>
    <name type="scientific">Haemophilus influenzae (strain ATCC 51907 / DSM 11121 / KW20 / Rd)</name>
    <dbReference type="NCBI Taxonomy" id="71421"/>
    <lineage>
        <taxon>Bacteria</taxon>
        <taxon>Pseudomonadati</taxon>
        <taxon>Pseudomonadota</taxon>
        <taxon>Gammaproteobacteria</taxon>
        <taxon>Pasteurellales</taxon>
        <taxon>Pasteurellaceae</taxon>
        <taxon>Haemophilus</taxon>
    </lineage>
</organism>
<accession>P44223</accession>
<sequence length="189" mass="21016">MNDKTTRGRASKVDLLPPNIKSTLTMMLRDKQYSQAEILEEINNIIADSGLDESMQLSKTGLNRFASKMERFGKKIREAREVAEVWTKQLVEAPQSDIGKLLMEAVKTMAFDLTLNADEAVANDPKFLNQLALIANRIEQAQSISEERERKVRKEVAQQAADTAEKVISQAGLSADTVAQIKQQILGIA</sequence>
<protein>
    <recommendedName>
        <fullName>Mu-like prophage FluMu protein gp27</fullName>
    </recommendedName>
</protein>
<dbReference type="EMBL" id="L42023">
    <property type="protein sequence ID" value="AAC23149.1"/>
    <property type="molecule type" value="Genomic_DNA"/>
</dbReference>
<dbReference type="PIR" id="H64032">
    <property type="entry name" value="H64032"/>
</dbReference>
<dbReference type="RefSeq" id="NP_439649.1">
    <property type="nucleotide sequence ID" value="NC_000907.1"/>
</dbReference>
<dbReference type="SMR" id="P44223"/>
<dbReference type="STRING" id="71421.HI_1499"/>
<dbReference type="EnsemblBacteria" id="AAC23149">
    <property type="protein sequence ID" value="AAC23149"/>
    <property type="gene ID" value="HI_1499"/>
</dbReference>
<dbReference type="KEGG" id="hin:HI_1499"/>
<dbReference type="PATRIC" id="fig|71421.8.peg.1569"/>
<dbReference type="eggNOG" id="ENOG50312E7">
    <property type="taxonomic scope" value="Bacteria"/>
</dbReference>
<dbReference type="HOGENOM" id="CLU_120444_2_0_6"/>
<dbReference type="OrthoDB" id="5873478at2"/>
<dbReference type="PhylomeDB" id="P44223"/>
<dbReference type="BioCyc" id="HINF71421:G1GJ1-1522-MONOMER"/>
<dbReference type="Proteomes" id="UP000000579">
    <property type="component" value="Chromosome"/>
</dbReference>
<dbReference type="InterPro" id="IPR021874">
    <property type="entry name" value="Phage_Mu_Gp27"/>
</dbReference>
<dbReference type="Pfam" id="PF11985">
    <property type="entry name" value="Phage_Mu_Gp27"/>
    <property type="match status" value="1"/>
</dbReference>